<feature type="chain" id="PRO_0000262453" description="Tau-theraphotoxin-Pc1c" evidence="2">
    <location>
        <begin position="1"/>
        <end position="34"/>
    </location>
</feature>
<feature type="modified residue" description="Phenylalanine amide" evidence="2">
    <location>
        <position position="34"/>
    </location>
</feature>
<feature type="disulfide bond" evidence="1">
    <location>
        <begin position="2"/>
        <end position="16"/>
    </location>
</feature>
<feature type="disulfide bond" evidence="1">
    <location>
        <begin position="9"/>
        <end position="21"/>
    </location>
</feature>
<feature type="disulfide bond" evidence="1">
    <location>
        <begin position="15"/>
        <end position="28"/>
    </location>
</feature>
<protein>
    <recommendedName>
        <fullName>Tau-theraphotoxin-Pc1c</fullName>
        <shortName>Tau-TRTX-Pc1c</shortName>
    </recommendedName>
    <alternativeName>
        <fullName evidence="3">Vanillotoxin-3</fullName>
        <shortName evidence="3">VaTx3</shortName>
    </alternativeName>
</protein>
<name>TX623_PSACA</name>
<proteinExistence type="evidence at protein level"/>
<accession>P0C246</accession>
<evidence type="ECO:0000250" key="1">
    <source>
        <dbReference type="UniProtKB" id="P60992"/>
    </source>
</evidence>
<evidence type="ECO:0000269" key="2">
    <source>
    </source>
</evidence>
<evidence type="ECO:0000303" key="3">
    <source>
    </source>
</evidence>
<evidence type="ECO:0000305" key="4"/>
<evidence type="ECO:0000305" key="5">
    <source>
    </source>
</evidence>
<comment type="function">
    <text evidence="2">Selectively activates mammalian TRPV1, or capsaicin receptor, a non-selective cation channel expressed by sensory neurons of the pain pathway. Is more potent than VaTx1 and VaTx2. Interacts with distinct regions of the channel than capsaicin, since it only acts on the extracellular face of the channel, and capsaicin binds to the cytosolic side. Also activates avian TRPV1, which is insensitive to capsaicin. In mice, elicits pain-related behaviors, such as licking and flinching of the affected limb. The paw of toxin-injected mice shows substantial edema.</text>
</comment>
<comment type="subcellular location">
    <subcellularLocation>
        <location evidence="2">Secreted</location>
    </subcellularLocation>
</comment>
<comment type="tissue specificity">
    <text evidence="5">Expressed by the venom gland.</text>
</comment>
<comment type="domain">
    <text evidence="1">The presence of a 'disulfide through disulfide knot' structurally defines this protein as a knottin.</text>
</comment>
<comment type="mass spectrometry" mass="4179.0" method="Unknown" evidence="2"/>
<comment type="miscellaneous">
    <text evidence="2">Negative results: does not affect TRPV2, TRPV3, TRPV4, TRPA1, TRPM8, Kv1.2/KCNA2, Kv2.1/KCNB1 and Kv4.2/KCND2 potassium channels.</text>
</comment>
<comment type="similarity">
    <text evidence="4">Belongs to the neurotoxin 10 (Hwtx-1) family. 62 (Vatx) subfamily.</text>
</comment>
<dbReference type="SMR" id="P0C246"/>
<dbReference type="TCDB" id="8.B.5.3.2">
    <property type="family name" value="the na(+)/k(+)/ca(2+) channel targeting tarantula huwentoxin (tht) family"/>
</dbReference>
<dbReference type="ArachnoServer" id="AS000276">
    <property type="toxin name" value="tau-theraphotoxin-Pc1c"/>
</dbReference>
<dbReference type="GO" id="GO:0005576">
    <property type="term" value="C:extracellular region"/>
    <property type="evidence" value="ECO:0007669"/>
    <property type="project" value="UniProtKB-SubCell"/>
</dbReference>
<dbReference type="GO" id="GO:0008200">
    <property type="term" value="F:ion channel inhibitor activity"/>
    <property type="evidence" value="ECO:0007669"/>
    <property type="project" value="InterPro"/>
</dbReference>
<dbReference type="GO" id="GO:0090729">
    <property type="term" value="F:toxin activity"/>
    <property type="evidence" value="ECO:0007669"/>
    <property type="project" value="UniProtKB-KW"/>
</dbReference>
<dbReference type="InterPro" id="IPR011696">
    <property type="entry name" value="Huwentoxin-1"/>
</dbReference>
<dbReference type="InterPro" id="IPR013140">
    <property type="entry name" value="Huwentoxin_CS1"/>
</dbReference>
<dbReference type="Pfam" id="PF07740">
    <property type="entry name" value="Toxin_12"/>
    <property type="match status" value="1"/>
</dbReference>
<dbReference type="SUPFAM" id="SSF57059">
    <property type="entry name" value="omega toxin-like"/>
    <property type="match status" value="1"/>
</dbReference>
<dbReference type="PROSITE" id="PS60021">
    <property type="entry name" value="HWTX_1"/>
    <property type="match status" value="1"/>
</dbReference>
<reference key="1">
    <citation type="journal article" date="2006" name="Nature">
        <title>Spider toxins activate the capsaicin receptor to produce inflammatory pain.</title>
        <authorList>
            <person name="Siemens J."/>
            <person name="Zhou S."/>
            <person name="Piskorowski R."/>
            <person name="Nikai T."/>
            <person name="Lumpkin E.A."/>
            <person name="Basbaum A.I."/>
            <person name="King D."/>
            <person name="Julius D."/>
        </authorList>
    </citation>
    <scope>PROTEIN SEQUENCE</scope>
    <scope>SYNTHESIS</scope>
    <scope>FUNCTION</scope>
    <scope>TOXIN TARGET</scope>
    <scope>MASS SPECTROMETRY</scope>
    <scope>SUBCELLULAR LOCATION</scope>
    <scope>AMIDATION AT PHE-34</scope>
    <source>
        <tissue>Venom</tissue>
    </source>
</reference>
<organism>
    <name type="scientific">Psalmopoeus cambridgei</name>
    <name type="common">Trinidad chevron tarantula</name>
    <dbReference type="NCBI Taxonomy" id="179874"/>
    <lineage>
        <taxon>Eukaryota</taxon>
        <taxon>Metazoa</taxon>
        <taxon>Ecdysozoa</taxon>
        <taxon>Arthropoda</taxon>
        <taxon>Chelicerata</taxon>
        <taxon>Arachnida</taxon>
        <taxon>Araneae</taxon>
        <taxon>Mygalomorphae</taxon>
        <taxon>Theraphosidae</taxon>
        <taxon>Psalmopoeus</taxon>
    </lineage>
</organism>
<keyword id="KW-0027">Amidation</keyword>
<keyword id="KW-0903">Direct protein sequencing</keyword>
<keyword id="KW-1015">Disulfide bond</keyword>
<keyword id="KW-0872">Ion channel impairing toxin</keyword>
<keyword id="KW-0960">Knottin</keyword>
<keyword id="KW-0528">Neurotoxin</keyword>
<keyword id="KW-0964">Secreted</keyword>
<keyword id="KW-0800">Toxin</keyword>
<sequence length="34" mass="4190">ECRWYLGGCKEDSECCEHLQCHSYWEWCLWDGSF</sequence>